<proteinExistence type="evidence at transcript level"/>
<organismHost>
    <name type="scientific">Homo sapiens</name>
    <name type="common">Human</name>
    <dbReference type="NCBI Taxonomy" id="9606"/>
</organismHost>
<dbReference type="EMBL" id="X59843">
    <property type="protein sequence ID" value="CAA42504.1"/>
    <property type="molecule type" value="mRNA"/>
</dbReference>
<dbReference type="PIR" id="A41041">
    <property type="entry name" value="VPXRCR"/>
</dbReference>
<dbReference type="RefSeq" id="YP_392512.1">
    <property type="nucleotide sequence ID" value="NC_007570.1"/>
</dbReference>
<dbReference type="SMR" id="P69481"/>
<dbReference type="GeneID" id="3773139"/>
<dbReference type="KEGG" id="vg:3773139"/>
<dbReference type="Proteomes" id="UP000007664">
    <property type="component" value="Genome"/>
</dbReference>
<dbReference type="GO" id="GO:0019031">
    <property type="term" value="C:viral envelope"/>
    <property type="evidence" value="ECO:0007669"/>
    <property type="project" value="UniProtKB-UniRule"/>
</dbReference>
<dbReference type="GO" id="GO:0039626">
    <property type="term" value="C:viral intermediate capsid"/>
    <property type="evidence" value="ECO:0007669"/>
    <property type="project" value="UniProtKB-UniRule"/>
</dbReference>
<dbReference type="GO" id="GO:0046789">
    <property type="term" value="F:host cell surface receptor binding"/>
    <property type="evidence" value="ECO:0007669"/>
    <property type="project" value="UniProtKB-UniRule"/>
</dbReference>
<dbReference type="GO" id="GO:0005198">
    <property type="term" value="F:structural molecule activity"/>
    <property type="evidence" value="ECO:0007669"/>
    <property type="project" value="UniProtKB-UniRule"/>
</dbReference>
<dbReference type="GO" id="GO:0019064">
    <property type="term" value="P:fusion of virus membrane with host plasma membrane"/>
    <property type="evidence" value="ECO:0007669"/>
    <property type="project" value="UniProtKB-UniRule"/>
</dbReference>
<dbReference type="Gene3D" id="2.60.120.170">
    <property type="match status" value="1"/>
</dbReference>
<dbReference type="Gene3D" id="1.10.1350.10">
    <property type="entry name" value="Viral capsid alpha domain"/>
    <property type="match status" value="1"/>
</dbReference>
<dbReference type="HAMAP" id="MF_04126">
    <property type="entry name" value="Rota_VP6"/>
    <property type="match status" value="1"/>
</dbReference>
<dbReference type="InterPro" id="IPR008980">
    <property type="entry name" value="Capsid_hemagglutn"/>
</dbReference>
<dbReference type="InterPro" id="IPR001385">
    <property type="entry name" value="Rotavirus_A/C_VP6"/>
</dbReference>
<dbReference type="InterPro" id="IPR008935">
    <property type="entry name" value="Virus_capsid_a-hlx_vir"/>
</dbReference>
<dbReference type="Pfam" id="PF00980">
    <property type="entry name" value="Rota_Capsid_VP6"/>
    <property type="match status" value="1"/>
</dbReference>
<dbReference type="SUPFAM" id="SSF48345">
    <property type="entry name" value="A virus capsid protein alpha-helical domain"/>
    <property type="match status" value="1"/>
</dbReference>
<dbReference type="SUPFAM" id="SSF49818">
    <property type="entry name" value="Viral protein domain"/>
    <property type="match status" value="1"/>
</dbReference>
<accession>P69481</accession>
<accession>P30213</accession>
<sequence length="395" mass="44720">MDVLFSIAKTVSDLKKKVVVGTIYTNVEDVVQQTNELIRTLNGNIFHTGGIGTQPQKEWNFQLPQLGTTLLNLDDNYVQSTRGIIDFLSSFIEAVCDDEIVREASRNGMQPQSPALILLSSSKFKTINFNNSSQSIKNWNAQSRRENPVYEYKNPMLFEYKNSYILQRANPQFGSVMGLRYYTTSNTCQIAAFDSTLAENAPNNTQRFVYNGRLKRPISNVLMKIEAGAPNISNPTILPDPNNQTTWLFNPVQLMNGTFTIEFYNNGQLIDMVRNMGIVTVRTFDSYRITIDMIRPAAMTQYVQRIFPQGGPYHFQATYMLTLSILDATTESVLCDSHSVEYSIVANVRRDSAMPAGTVFQPGFPWEHTLSNYTVAQEDNLERLLLIASVKRMVM</sequence>
<comment type="function">
    <text evidence="1">Intermediate capsid protein that self assembles to form an icosahedral capsid with a T=13 symmetry, which consists of 230 trimers of VP6, with channels at each of its five-fold vertices. This capsid constitutes the middle concentric layer of the viral mature particle. The innermost VP2 capsid and the intermediate VP6 capsid remain intact following cell entry to protect the dsRNA from degradation and to prevent unfavorable antiviral responses in the host cell during all the replication cycle of the virus. Nascent transcripts are transcribed within the structural confines of this double-layered particle (DLP) and are extruded through the channels at the five-fold axes. VP6 is required for the transcription activity of the DLP.</text>
</comment>
<comment type="subunit">
    <text evidence="1">Homotrimer. Interacts with the inner capsid protein VP2. Interacts with the outer capsid glycoprotein VP7.</text>
</comment>
<comment type="subcellular location">
    <subcellularLocation>
        <location evidence="1">Virion</location>
    </subcellularLocation>
    <text evidence="1">Component of the intermediate capsid. Also found in spherical cytoplasmic structures, called virus factories, that appear early after infection and are the site of viral replication and packaging.</text>
</comment>
<comment type="similarity">
    <text evidence="1">Belongs to the rotavirus VP6 family.</text>
</comment>
<evidence type="ECO:0000255" key="1">
    <source>
        <dbReference type="HAMAP-Rule" id="MF_04126"/>
    </source>
</evidence>
<feature type="chain" id="PRO_0000149569" description="Intermediate capsid protein VP6">
    <location>
        <begin position="1"/>
        <end position="395"/>
    </location>
</feature>
<organism>
    <name type="scientific">Rotavirus C (isolate RVC/Human/United Kingdom/Bristol/1989)</name>
    <name type="common">RV-C</name>
    <dbReference type="NCBI Taxonomy" id="31567"/>
    <lineage>
        <taxon>Viruses</taxon>
        <taxon>Riboviria</taxon>
        <taxon>Orthornavirae</taxon>
        <taxon>Duplornaviricota</taxon>
        <taxon>Resentoviricetes</taxon>
        <taxon>Reovirales</taxon>
        <taxon>Sedoreoviridae</taxon>
        <taxon>Rotavirus</taxon>
        <taxon>Rotavirus C</taxon>
    </lineage>
</organism>
<name>VP6_ROTHC</name>
<reference key="1">
    <citation type="journal article" date="1991" name="Virology">
        <title>Molecular cloning, sequence analysis and coding assignment of the major inner capsid protein gene of human group C rotavirus.</title>
        <authorList>
            <person name="Cooke S.J."/>
            <person name="Lambden P.R."/>
            <person name="Caul E.O."/>
            <person name="Clarke I.N."/>
        </authorList>
    </citation>
    <scope>NUCLEOTIDE SEQUENCE [MRNA]</scope>
</reference>
<protein>
    <recommendedName>
        <fullName evidence="1">Intermediate capsid protein VP6</fullName>
    </recommendedName>
</protein>
<keyword id="KW-0167">Capsid protein</keyword>
<keyword id="KW-1154">Intermediate capsid protein</keyword>
<keyword id="KW-1185">Reference proteome</keyword>
<keyword id="KW-0946">Virion</keyword>